<organism>
    <name type="scientific">Leptospira borgpetersenii serovar Hardjo-bovis (strain JB197)</name>
    <dbReference type="NCBI Taxonomy" id="355277"/>
    <lineage>
        <taxon>Bacteria</taxon>
        <taxon>Pseudomonadati</taxon>
        <taxon>Spirochaetota</taxon>
        <taxon>Spirochaetia</taxon>
        <taxon>Leptospirales</taxon>
        <taxon>Leptospiraceae</taxon>
        <taxon>Leptospira</taxon>
    </lineage>
</organism>
<name>DAPB_LEPBJ</name>
<reference key="1">
    <citation type="journal article" date="2006" name="Proc. Natl. Acad. Sci. U.S.A.">
        <title>Genome reduction in Leptospira borgpetersenii reflects limited transmission potential.</title>
        <authorList>
            <person name="Bulach D.M."/>
            <person name="Zuerner R.L."/>
            <person name="Wilson P."/>
            <person name="Seemann T."/>
            <person name="McGrath A."/>
            <person name="Cullen P.A."/>
            <person name="Davis J."/>
            <person name="Johnson M."/>
            <person name="Kuczek E."/>
            <person name="Alt D.P."/>
            <person name="Peterson-Burch B."/>
            <person name="Coppel R.L."/>
            <person name="Rood J.I."/>
            <person name="Davies J.K."/>
            <person name="Adler B."/>
        </authorList>
    </citation>
    <scope>NUCLEOTIDE SEQUENCE [LARGE SCALE GENOMIC DNA]</scope>
    <source>
        <strain>JB197</strain>
    </source>
</reference>
<sequence>MSDSKYQIALIGGSGRMGRAIITVLSSSSKSTLSSSVVSGGSVFLGMDSGLHSGIKQNGVNFSSDLEAAVRSADCVIDFSTYQNLDFTLKACIQHRKPVVIGTTGLTELQKDALKVASKEIGIVYSPNMSIGVNLLFKLTEIAAKAMGENSDIEIQDIHHRHKKDAPSGTAEKLKSILLETLGRTSKNVIHGRHGILKERDPREIGIHTFRAGEVIGDHTVYFFTPEERIEITHRAQDRKTFAVGSIHAAEFLVGRKPGLYDMFAVLGL</sequence>
<proteinExistence type="inferred from homology"/>
<gene>
    <name evidence="1" type="primary">dapB</name>
    <name type="ordered locus">LBJ_0897</name>
</gene>
<dbReference type="EC" id="1.17.1.8" evidence="1"/>
<dbReference type="EMBL" id="CP000350">
    <property type="protein sequence ID" value="ABJ75541.1"/>
    <property type="molecule type" value="Genomic_DNA"/>
</dbReference>
<dbReference type="RefSeq" id="WP_011669745.1">
    <property type="nucleotide sequence ID" value="NC_008510.1"/>
</dbReference>
<dbReference type="SMR" id="Q04U79"/>
<dbReference type="KEGG" id="lbj:LBJ_0897"/>
<dbReference type="HOGENOM" id="CLU_047479_2_1_12"/>
<dbReference type="UniPathway" id="UPA00034">
    <property type="reaction ID" value="UER00018"/>
</dbReference>
<dbReference type="Proteomes" id="UP000000656">
    <property type="component" value="Chromosome 1"/>
</dbReference>
<dbReference type="GO" id="GO:0005829">
    <property type="term" value="C:cytosol"/>
    <property type="evidence" value="ECO:0007669"/>
    <property type="project" value="TreeGrafter"/>
</dbReference>
<dbReference type="GO" id="GO:0008839">
    <property type="term" value="F:4-hydroxy-tetrahydrodipicolinate reductase"/>
    <property type="evidence" value="ECO:0007669"/>
    <property type="project" value="UniProtKB-EC"/>
</dbReference>
<dbReference type="GO" id="GO:0051287">
    <property type="term" value="F:NAD binding"/>
    <property type="evidence" value="ECO:0007669"/>
    <property type="project" value="UniProtKB-UniRule"/>
</dbReference>
<dbReference type="GO" id="GO:0050661">
    <property type="term" value="F:NADP binding"/>
    <property type="evidence" value="ECO:0007669"/>
    <property type="project" value="UniProtKB-UniRule"/>
</dbReference>
<dbReference type="GO" id="GO:0016726">
    <property type="term" value="F:oxidoreductase activity, acting on CH or CH2 groups, NAD or NADP as acceptor"/>
    <property type="evidence" value="ECO:0007669"/>
    <property type="project" value="UniProtKB-UniRule"/>
</dbReference>
<dbReference type="GO" id="GO:0019877">
    <property type="term" value="P:diaminopimelate biosynthetic process"/>
    <property type="evidence" value="ECO:0007669"/>
    <property type="project" value="UniProtKB-UniRule"/>
</dbReference>
<dbReference type="GO" id="GO:0009089">
    <property type="term" value="P:lysine biosynthetic process via diaminopimelate"/>
    <property type="evidence" value="ECO:0007669"/>
    <property type="project" value="UniProtKB-UniRule"/>
</dbReference>
<dbReference type="CDD" id="cd02274">
    <property type="entry name" value="DHDPR_N"/>
    <property type="match status" value="1"/>
</dbReference>
<dbReference type="FunFam" id="3.30.360.10:FF:000004">
    <property type="entry name" value="4-hydroxy-tetrahydrodipicolinate reductase"/>
    <property type="match status" value="1"/>
</dbReference>
<dbReference type="Gene3D" id="3.30.360.10">
    <property type="entry name" value="Dihydrodipicolinate Reductase, domain 2"/>
    <property type="match status" value="1"/>
</dbReference>
<dbReference type="Gene3D" id="3.40.50.720">
    <property type="entry name" value="NAD(P)-binding Rossmann-like Domain"/>
    <property type="match status" value="1"/>
</dbReference>
<dbReference type="HAMAP" id="MF_00102">
    <property type="entry name" value="DapB"/>
    <property type="match status" value="1"/>
</dbReference>
<dbReference type="InterPro" id="IPR022663">
    <property type="entry name" value="DapB_C"/>
</dbReference>
<dbReference type="InterPro" id="IPR000846">
    <property type="entry name" value="DapB_N"/>
</dbReference>
<dbReference type="InterPro" id="IPR022664">
    <property type="entry name" value="DapB_N_CS"/>
</dbReference>
<dbReference type="InterPro" id="IPR023940">
    <property type="entry name" value="DHDPR_bac"/>
</dbReference>
<dbReference type="InterPro" id="IPR036291">
    <property type="entry name" value="NAD(P)-bd_dom_sf"/>
</dbReference>
<dbReference type="NCBIfam" id="TIGR00036">
    <property type="entry name" value="dapB"/>
    <property type="match status" value="1"/>
</dbReference>
<dbReference type="PANTHER" id="PTHR20836:SF0">
    <property type="entry name" value="4-HYDROXY-TETRAHYDRODIPICOLINATE REDUCTASE 1, CHLOROPLASTIC-RELATED"/>
    <property type="match status" value="1"/>
</dbReference>
<dbReference type="PANTHER" id="PTHR20836">
    <property type="entry name" value="DIHYDRODIPICOLINATE REDUCTASE"/>
    <property type="match status" value="1"/>
</dbReference>
<dbReference type="Pfam" id="PF05173">
    <property type="entry name" value="DapB_C"/>
    <property type="match status" value="1"/>
</dbReference>
<dbReference type="Pfam" id="PF01113">
    <property type="entry name" value="DapB_N"/>
    <property type="match status" value="1"/>
</dbReference>
<dbReference type="PIRSF" id="PIRSF000161">
    <property type="entry name" value="DHPR"/>
    <property type="match status" value="1"/>
</dbReference>
<dbReference type="SUPFAM" id="SSF55347">
    <property type="entry name" value="Glyceraldehyde-3-phosphate dehydrogenase-like, C-terminal domain"/>
    <property type="match status" value="1"/>
</dbReference>
<dbReference type="SUPFAM" id="SSF51735">
    <property type="entry name" value="NAD(P)-binding Rossmann-fold domains"/>
    <property type="match status" value="1"/>
</dbReference>
<dbReference type="PROSITE" id="PS01298">
    <property type="entry name" value="DAPB"/>
    <property type="match status" value="1"/>
</dbReference>
<evidence type="ECO:0000255" key="1">
    <source>
        <dbReference type="HAMAP-Rule" id="MF_00102"/>
    </source>
</evidence>
<evidence type="ECO:0000305" key="2"/>
<keyword id="KW-0028">Amino-acid biosynthesis</keyword>
<keyword id="KW-0963">Cytoplasm</keyword>
<keyword id="KW-0220">Diaminopimelate biosynthesis</keyword>
<keyword id="KW-0457">Lysine biosynthesis</keyword>
<keyword id="KW-0520">NAD</keyword>
<keyword id="KW-0521">NADP</keyword>
<keyword id="KW-0560">Oxidoreductase</keyword>
<comment type="function">
    <text evidence="1">Catalyzes the conversion of 4-hydroxy-tetrahydrodipicolinate (HTPA) to tetrahydrodipicolinate.</text>
</comment>
<comment type="catalytic activity">
    <reaction evidence="1">
        <text>(S)-2,3,4,5-tetrahydrodipicolinate + NAD(+) + H2O = (2S,4S)-4-hydroxy-2,3,4,5-tetrahydrodipicolinate + NADH + H(+)</text>
        <dbReference type="Rhea" id="RHEA:35323"/>
        <dbReference type="ChEBI" id="CHEBI:15377"/>
        <dbReference type="ChEBI" id="CHEBI:15378"/>
        <dbReference type="ChEBI" id="CHEBI:16845"/>
        <dbReference type="ChEBI" id="CHEBI:57540"/>
        <dbReference type="ChEBI" id="CHEBI:57945"/>
        <dbReference type="ChEBI" id="CHEBI:67139"/>
        <dbReference type="EC" id="1.17.1.8"/>
    </reaction>
</comment>
<comment type="catalytic activity">
    <reaction evidence="1">
        <text>(S)-2,3,4,5-tetrahydrodipicolinate + NADP(+) + H2O = (2S,4S)-4-hydroxy-2,3,4,5-tetrahydrodipicolinate + NADPH + H(+)</text>
        <dbReference type="Rhea" id="RHEA:35331"/>
        <dbReference type="ChEBI" id="CHEBI:15377"/>
        <dbReference type="ChEBI" id="CHEBI:15378"/>
        <dbReference type="ChEBI" id="CHEBI:16845"/>
        <dbReference type="ChEBI" id="CHEBI:57783"/>
        <dbReference type="ChEBI" id="CHEBI:58349"/>
        <dbReference type="ChEBI" id="CHEBI:67139"/>
        <dbReference type="EC" id="1.17.1.8"/>
    </reaction>
</comment>
<comment type="pathway">
    <text evidence="1">Amino-acid biosynthesis; L-lysine biosynthesis via DAP pathway; (S)-tetrahydrodipicolinate from L-aspartate: step 4/4.</text>
</comment>
<comment type="subcellular location">
    <subcellularLocation>
        <location evidence="1">Cytoplasm</location>
    </subcellularLocation>
</comment>
<comment type="similarity">
    <text evidence="1">Belongs to the DapB family.</text>
</comment>
<comment type="caution">
    <text evidence="2">Was originally thought to be a dihydrodipicolinate reductase (DHDPR), catalyzing the conversion of dihydrodipicolinate to tetrahydrodipicolinate. However, it was shown in E.coli that the substrate of the enzymatic reaction is not dihydrodipicolinate (DHDP) but in fact (2S,4S)-4-hydroxy-2,3,4,5-tetrahydrodipicolinic acid (HTPA), the product released by the DapA-catalyzed reaction.</text>
</comment>
<protein>
    <recommendedName>
        <fullName evidence="1">4-hydroxy-tetrahydrodipicolinate reductase</fullName>
        <shortName evidence="1">HTPA reductase</shortName>
        <ecNumber evidence="1">1.17.1.8</ecNumber>
    </recommendedName>
</protein>
<feature type="chain" id="PRO_1000008580" description="4-hydroxy-tetrahydrodipicolinate reductase">
    <location>
        <begin position="1"/>
        <end position="269"/>
    </location>
</feature>
<feature type="active site" description="Proton donor/acceptor" evidence="1">
    <location>
        <position position="159"/>
    </location>
</feature>
<feature type="active site" description="Proton donor" evidence="1">
    <location>
        <position position="163"/>
    </location>
</feature>
<feature type="binding site" evidence="1">
    <location>
        <begin position="12"/>
        <end position="17"/>
    </location>
    <ligand>
        <name>NAD(+)</name>
        <dbReference type="ChEBI" id="CHEBI:57540"/>
    </ligand>
</feature>
<feature type="binding site" evidence="1">
    <location>
        <begin position="102"/>
        <end position="104"/>
    </location>
    <ligand>
        <name>NAD(+)</name>
        <dbReference type="ChEBI" id="CHEBI:57540"/>
    </ligand>
</feature>
<feature type="binding site" evidence="1">
    <location>
        <begin position="126"/>
        <end position="129"/>
    </location>
    <ligand>
        <name>NAD(+)</name>
        <dbReference type="ChEBI" id="CHEBI:57540"/>
    </ligand>
</feature>
<feature type="binding site" evidence="1">
    <location>
        <position position="160"/>
    </location>
    <ligand>
        <name>(S)-2,3,4,5-tetrahydrodipicolinate</name>
        <dbReference type="ChEBI" id="CHEBI:16845"/>
    </ligand>
</feature>
<feature type="binding site" evidence="1">
    <location>
        <begin position="169"/>
        <end position="170"/>
    </location>
    <ligand>
        <name>(S)-2,3,4,5-tetrahydrodipicolinate</name>
        <dbReference type="ChEBI" id="CHEBI:16845"/>
    </ligand>
</feature>
<accession>Q04U79</accession>